<reference key="1">
    <citation type="journal article" date="1996" name="Biochem. Biophys. Res. Commun.">
        <title>Human short-chain L-3-hydroxyacyl-CoA dehydrogenase: cloning and characterization of the coding sequence.</title>
        <authorList>
            <person name="Vredendaal P.J.C.M."/>
            <person name="van den Berg I.E.T."/>
            <person name="Malingre H.E.M."/>
            <person name="Stroobants A.K."/>
            <person name="Oldeweghuis D.E.M."/>
            <person name="Berger R."/>
        </authorList>
    </citation>
    <scope>NUCLEOTIDE SEQUENCE [MRNA] (ISOFORM 1)</scope>
    <scope>VARIANTS PRO-86 AND HIS-152</scope>
    <scope>TISSUE SPECIFICITY</scope>
    <scope>SUBCELLULAR LOCATION</scope>
    <source>
        <tissue>Liver</tissue>
    </source>
</reference>
<reference key="2">
    <citation type="submission" date="1996-11" db="EMBL/GenBank/DDBJ databases">
        <title>Cloning of a L-3-hydroxyacyl CoA dehydrogenase that binds to GLUT4 glucose transporter cytoplasmic C-terminus: possible crosstalk between glucose transport and fatty acid metabolism.</title>
        <authorList>
            <person name="Shi Y."/>
            <person name="Samuel S.J."/>
            <person name="Lee W."/>
            <person name="Yu C.H."/>
            <person name="Zhang W."/>
            <person name="Lachaal M."/>
            <person name="Jung C.Y."/>
        </authorList>
    </citation>
    <scope>NUCLEOTIDE SEQUENCE [GENOMIC DNA / MRNA] (ISOFORM 2)</scope>
    <scope>NUCLEOTIDE SEQUENCE [MRNA] OF 7-314 (ISOFORM 1)</scope>
    <scope>VARIANT PRO-86</scope>
    <source>
        <tissue>Skeletal muscle</tissue>
    </source>
</reference>
<reference key="3">
    <citation type="submission" date="1998-09" db="EMBL/GenBank/DDBJ databases">
        <title>Human short chain L-3-hydroxyacyl-CoA dehydrogenase.</title>
        <authorList>
            <person name="O'Brien L.K."/>
            <person name="Sims H.F."/>
            <person name="Strauss A.W."/>
        </authorList>
    </citation>
    <scope>NUCLEOTIDE SEQUENCE [GENOMIC DNA]</scope>
    <scope>VARIANT PRO-86</scope>
</reference>
<reference key="4">
    <citation type="journal article" date="2005" name="Nature">
        <title>Generation and annotation of the DNA sequences of human chromosomes 2 and 4.</title>
        <authorList>
            <person name="Hillier L.W."/>
            <person name="Graves T.A."/>
            <person name="Fulton R.S."/>
            <person name="Fulton L.A."/>
            <person name="Pepin K.H."/>
            <person name="Minx P."/>
            <person name="Wagner-McPherson C."/>
            <person name="Layman D."/>
            <person name="Wylie K."/>
            <person name="Sekhon M."/>
            <person name="Becker M.C."/>
            <person name="Fewell G.A."/>
            <person name="Delehaunty K.D."/>
            <person name="Miner T.L."/>
            <person name="Nash W.E."/>
            <person name="Kremitzki C."/>
            <person name="Oddy L."/>
            <person name="Du H."/>
            <person name="Sun H."/>
            <person name="Bradshaw-Cordum H."/>
            <person name="Ali J."/>
            <person name="Carter J."/>
            <person name="Cordes M."/>
            <person name="Harris A."/>
            <person name="Isak A."/>
            <person name="van Brunt A."/>
            <person name="Nguyen C."/>
            <person name="Du F."/>
            <person name="Courtney L."/>
            <person name="Kalicki J."/>
            <person name="Ozersky P."/>
            <person name="Abbott S."/>
            <person name="Armstrong J."/>
            <person name="Belter E.A."/>
            <person name="Caruso L."/>
            <person name="Cedroni M."/>
            <person name="Cotton M."/>
            <person name="Davidson T."/>
            <person name="Desai A."/>
            <person name="Elliott G."/>
            <person name="Erb T."/>
            <person name="Fronick C."/>
            <person name="Gaige T."/>
            <person name="Haakenson W."/>
            <person name="Haglund K."/>
            <person name="Holmes A."/>
            <person name="Harkins R."/>
            <person name="Kim K."/>
            <person name="Kruchowski S.S."/>
            <person name="Strong C.M."/>
            <person name="Grewal N."/>
            <person name="Goyea E."/>
            <person name="Hou S."/>
            <person name="Levy A."/>
            <person name="Martinka S."/>
            <person name="Mead K."/>
            <person name="McLellan M.D."/>
            <person name="Meyer R."/>
            <person name="Randall-Maher J."/>
            <person name="Tomlinson C."/>
            <person name="Dauphin-Kohlberg S."/>
            <person name="Kozlowicz-Reilly A."/>
            <person name="Shah N."/>
            <person name="Swearengen-Shahid S."/>
            <person name="Snider J."/>
            <person name="Strong J.T."/>
            <person name="Thompson J."/>
            <person name="Yoakum M."/>
            <person name="Leonard S."/>
            <person name="Pearman C."/>
            <person name="Trani L."/>
            <person name="Radionenko M."/>
            <person name="Waligorski J.E."/>
            <person name="Wang C."/>
            <person name="Rock S.M."/>
            <person name="Tin-Wollam A.-M."/>
            <person name="Maupin R."/>
            <person name="Latreille P."/>
            <person name="Wendl M.C."/>
            <person name="Yang S.-P."/>
            <person name="Pohl C."/>
            <person name="Wallis J.W."/>
            <person name="Spieth J."/>
            <person name="Bieri T.A."/>
            <person name="Berkowicz N."/>
            <person name="Nelson J.O."/>
            <person name="Osborne J."/>
            <person name="Ding L."/>
            <person name="Meyer R."/>
            <person name="Sabo A."/>
            <person name="Shotland Y."/>
            <person name="Sinha P."/>
            <person name="Wohldmann P.E."/>
            <person name="Cook L.L."/>
            <person name="Hickenbotham M.T."/>
            <person name="Eldred J."/>
            <person name="Williams D."/>
            <person name="Jones T.A."/>
            <person name="She X."/>
            <person name="Ciccarelli F.D."/>
            <person name="Izaurralde E."/>
            <person name="Taylor J."/>
            <person name="Schmutz J."/>
            <person name="Myers R.M."/>
            <person name="Cox D.R."/>
            <person name="Huang X."/>
            <person name="McPherson J.D."/>
            <person name="Mardis E.R."/>
            <person name="Clifton S.W."/>
            <person name="Warren W.C."/>
            <person name="Chinwalla A.T."/>
            <person name="Eddy S.R."/>
            <person name="Marra M.A."/>
            <person name="Ovcharenko I."/>
            <person name="Furey T.S."/>
            <person name="Miller W."/>
            <person name="Eichler E.E."/>
            <person name="Bork P."/>
            <person name="Suyama M."/>
            <person name="Torrents D."/>
            <person name="Waterston R.H."/>
            <person name="Wilson R.K."/>
        </authorList>
    </citation>
    <scope>NUCLEOTIDE SEQUENCE [LARGE SCALE GENOMIC DNA]</scope>
</reference>
<reference key="5">
    <citation type="journal article" date="2004" name="Genome Res.">
        <title>The status, quality, and expansion of the NIH full-length cDNA project: the Mammalian Gene Collection (MGC).</title>
        <authorList>
            <consortium name="The MGC Project Team"/>
        </authorList>
    </citation>
    <scope>NUCLEOTIDE SEQUENCE [LARGE SCALE MRNA] (ISOFORM 1)</scope>
    <scope>VARIANT PRO-86</scope>
    <source>
        <tissue>Lung</tissue>
    </source>
</reference>
<reference key="6">
    <citation type="journal article" date="2009" name="Science">
        <title>Lysine acetylation targets protein complexes and co-regulates major cellular functions.</title>
        <authorList>
            <person name="Choudhary C."/>
            <person name="Kumar C."/>
            <person name="Gnad F."/>
            <person name="Nielsen M.L."/>
            <person name="Rehman M."/>
            <person name="Walther T.C."/>
            <person name="Olsen J.V."/>
            <person name="Mann M."/>
        </authorList>
    </citation>
    <scope>ACETYLATION [LARGE SCALE ANALYSIS] AT LYS-185; LYS-202; LYS-241 AND LYS-312</scope>
    <scope>IDENTIFICATION BY MASS SPECTROMETRY [LARGE SCALE ANALYSIS]</scope>
</reference>
<reference key="7">
    <citation type="journal article" date="2011" name="BMC Syst. Biol.">
        <title>Initial characterization of the human central proteome.</title>
        <authorList>
            <person name="Burkard T.R."/>
            <person name="Planyavsky M."/>
            <person name="Kaupe I."/>
            <person name="Breitwieser F.P."/>
            <person name="Buerckstuemmer T."/>
            <person name="Bennett K.L."/>
            <person name="Superti-Furga G."/>
            <person name="Colinge J."/>
        </authorList>
    </citation>
    <scope>IDENTIFICATION BY MASS SPECTROMETRY [LARGE SCALE ANALYSIS]</scope>
</reference>
<reference key="8">
    <citation type="journal article" date="2014" name="J. Proteomics">
        <title>An enzyme assisted RP-RPLC approach for in-depth analysis of human liver phosphoproteome.</title>
        <authorList>
            <person name="Bian Y."/>
            <person name="Song C."/>
            <person name="Cheng K."/>
            <person name="Dong M."/>
            <person name="Wang F."/>
            <person name="Huang J."/>
            <person name="Sun D."/>
            <person name="Wang L."/>
            <person name="Ye M."/>
            <person name="Zou H."/>
        </authorList>
    </citation>
    <scope>IDENTIFICATION BY MASS SPECTROMETRY [LARGE SCALE ANALYSIS]</scope>
    <source>
        <tissue>Liver</tissue>
    </source>
</reference>
<reference key="9">
    <citation type="journal article" date="2015" name="Proteomics">
        <title>N-terminome analysis of the human mitochondrial proteome.</title>
        <authorList>
            <person name="Vaca Jacome A.S."/>
            <person name="Rabilloud T."/>
            <person name="Schaeffer-Reiss C."/>
            <person name="Rompais M."/>
            <person name="Ayoub D."/>
            <person name="Lane L."/>
            <person name="Bairoch A."/>
            <person name="Van Dorsselaer A."/>
            <person name="Carapito C."/>
        </authorList>
    </citation>
    <scope>IDENTIFICATION BY MASS SPECTROMETRY [LARGE SCALE ANALYSIS]</scope>
</reference>
<reference key="10">
    <citation type="journal article" date="2018" name="Cell Res.">
        <title>Landscape of the regulatory elements for lysine 2-hydroxyisobutyrylation pathway.</title>
        <authorList>
            <person name="Huang H."/>
            <person name="Luo Z."/>
            <person name="Qi S."/>
            <person name="Huang J."/>
            <person name="Xu P."/>
            <person name="Wang X."/>
            <person name="Gao L."/>
            <person name="Li F."/>
            <person name="Wang J."/>
            <person name="Zhao W."/>
            <person name="Gu W."/>
            <person name="Chen Z."/>
            <person name="Dai L."/>
            <person name="Dai J."/>
            <person name="Zhao Y."/>
        </authorList>
    </citation>
    <scope>HYDROXYBUTYRYLATION AT LYS-127</scope>
</reference>
<reference key="11">
    <citation type="journal article" date="1999" name="Biochemistry">
        <title>Biochemical characterization and crystal structure determination of human heart short chain L-3-hydroxyacyl-CoA dehydrogenase provide insights into catalytic mechanism.</title>
        <authorList>
            <person name="Barycki J.J."/>
            <person name="O'Brien L.K."/>
            <person name="Bratt J.M."/>
            <person name="Zhang R."/>
            <person name="Sanishvili R."/>
            <person name="Strauss A.W."/>
            <person name="Banaszak L.J."/>
        </authorList>
    </citation>
    <scope>X-RAY CRYSTALLOGRAPHY (2.0 ANGSTROMS) OF 13-314 IN COMPLEX WITH SUBSTRATE AND NAD</scope>
    <scope>CATALYTIC ACTIVITY</scope>
    <scope>BIOPHYSICOCHEMICAL PROPERTIES</scope>
    <scope>FUNCTION</scope>
    <scope>SUBUNIT</scope>
</reference>
<reference key="12">
    <citation type="journal article" date="2000" name="J. Biol. Chem.">
        <title>Sequestration of the active site by interdomain shifting. Crystallographic and spectroscopic evidence for distinct conformations of L-3-hydroxyacyl-CoA dehydrogenase.</title>
        <authorList>
            <person name="Barycki J.J."/>
            <person name="O'Brien L.K."/>
            <person name="Strauss A.W."/>
            <person name="Banaszak L.J."/>
        </authorList>
    </citation>
    <scope>X-RAY CRYSTALLOGRAPHY (1.8 ANGSTROMS) OF 13-314 IN COMPLEX WITH SUBSTRATE AND NAD</scope>
    <scope>SUBUNIT</scope>
</reference>
<reference key="13">
    <citation type="journal article" date="2005" name="FEBS J.">
        <title>3-hydroxyacyl-CoA dehydrogenase and short chain 3-hydroxyacyl-CoA dehydrogenase in human health and disease.</title>
        <authorList>
            <person name="Yang S.-Y."/>
            <person name="He X.-Y."/>
            <person name="Schulz H."/>
        </authorList>
    </citation>
    <scope>REVIEW</scope>
</reference>
<reference key="14">
    <citation type="journal article" date="2000" name="J. Inherit. Metab. Dis. 23 Suppl.">
        <title>Fulminant hepatic failure associated with mutations in the medium and short chain L-3-hydroxyacyl-CoA dehydrogenase gene.</title>
        <authorList>
            <person name="O'Brien L.K."/>
            <person name="Rinaldo P."/>
            <person name="Sims H.F."/>
            <person name="Alonso E.M."/>
            <person name="Charrow J."/>
            <person name="Jones P.M."/>
            <person name="Bennett M.J."/>
            <person name="Barycki J.J."/>
            <person name="Banaszak L.J."/>
            <person name="Strauss A.W."/>
        </authorList>
    </citation>
    <scope>VARIANTS HADH DEFICIENCY THR-40 AND GLU-57</scope>
</reference>
<reference key="15">
    <citation type="journal article" date="2001" name="J. Clin. Invest.">
        <title>Hyperinsulinism in short-chain L-3-hydroxyacyl-CoA dehydrogenase deficiency reveals the importance of beta-oxidation in insulin secretion.</title>
        <authorList>
            <person name="Clayton P.T."/>
            <person name="Eaton S."/>
            <person name="Aynsley-Green A."/>
            <person name="Edginton M."/>
            <person name="Hussain K."/>
            <person name="Krywawych S."/>
            <person name="Datta V."/>
            <person name="Malingre H.E.M."/>
            <person name="Berger R."/>
            <person name="van den Berg I.E.T."/>
        </authorList>
    </citation>
    <scope>VARIANT HHF4 LEU-258</scope>
    <scope>CHARACTERIZATION OF VARIANT HHF4 LEU-258</scope>
    <scope>CATALYTIC ACTIVITY</scope>
    <scope>FUNCTION</scope>
    <scope>PATHWAY</scope>
</reference>
<reference key="16">
    <citation type="journal article" date="2006" name="Mol. Genet. Metab.">
        <title>Reye-like syndrome resulting from novel missense mutations in mitochondrial medium- and short-chain l-3-hydroxy-acyl-CoA dehydrogenase.</title>
        <authorList>
            <person name="Bennett M.J."/>
            <person name="Russell L.K."/>
            <person name="Tokunaga C."/>
            <person name="Narayan S.B."/>
            <person name="Tan L."/>
            <person name="Seegmiller A."/>
            <person name="Boriack R.L."/>
            <person name="Strauss A.W."/>
        </authorList>
    </citation>
    <scope>VARIANTS GLY-57 AND HIS-226</scope>
    <scope>CATALYTIC ACTIVITY</scope>
    <scope>FUNCTION</scope>
    <scope>CHARACTERIZATION OF VARIANTS GLY-57 AND HIS-226</scope>
    <scope>BIOPHYSICOCHEMICAL PROPERTIES</scope>
    <scope>SUBUNIT</scope>
    <scope>PATHWAY</scope>
</reference>
<comment type="function">
    <text evidence="2 3 5 7">Mitochondrial fatty acid beta-oxidation enzyme that catalyzes the third step of the beta-oxidation cycle for medium and short-chain 3-hydroxy fatty acyl-CoAs (C4 to C10) (PubMed:10231530, PubMed:11489939, PubMed:16725361). Plays a role in the control of insulin secretion by inhibiting the activation of glutamate dehydrogenase 1 (GLUD1), an enzyme that has an important role in regulating amino acid-induced insulin secretion (By similarity). Plays a role in the maintenance of normal spermatogenesis through the reduction of fatty acid accumulation in the testes (By similarity).</text>
</comment>
<comment type="catalytic activity">
    <reaction evidence="3 5 7">
        <text>a (3S)-3-hydroxyacyl-CoA + NAD(+) = a 3-oxoacyl-CoA + NADH + H(+)</text>
        <dbReference type="Rhea" id="RHEA:22432"/>
        <dbReference type="ChEBI" id="CHEBI:15378"/>
        <dbReference type="ChEBI" id="CHEBI:57318"/>
        <dbReference type="ChEBI" id="CHEBI:57540"/>
        <dbReference type="ChEBI" id="CHEBI:57945"/>
        <dbReference type="ChEBI" id="CHEBI:90726"/>
        <dbReference type="EC" id="1.1.1.35"/>
    </reaction>
</comment>
<comment type="catalytic activity">
    <reaction evidence="3 7">
        <text>(3S)-3-hydroxybutanoyl-CoA + NAD(+) = acetoacetyl-CoA + NADH + H(+)</text>
        <dbReference type="Rhea" id="RHEA:30799"/>
        <dbReference type="ChEBI" id="CHEBI:15378"/>
        <dbReference type="ChEBI" id="CHEBI:57286"/>
        <dbReference type="ChEBI" id="CHEBI:57316"/>
        <dbReference type="ChEBI" id="CHEBI:57540"/>
        <dbReference type="ChEBI" id="CHEBI:57945"/>
    </reaction>
</comment>
<comment type="catalytic activity">
    <reaction evidence="1">
        <text>(3S)-hydroxydecanoyl-CoA + NAD(+) = 3-oxodecanoyl-CoA + NADH + H(+)</text>
        <dbReference type="Rhea" id="RHEA:31187"/>
        <dbReference type="ChEBI" id="CHEBI:15378"/>
        <dbReference type="ChEBI" id="CHEBI:57540"/>
        <dbReference type="ChEBI" id="CHEBI:57945"/>
        <dbReference type="ChEBI" id="CHEBI:62548"/>
        <dbReference type="ChEBI" id="CHEBI:62616"/>
    </reaction>
</comment>
<comment type="catalytic activity">
    <reaction evidence="1">
        <text>(3S)-hydroxyhexadecanoyl-CoA + NAD(+) = 3-oxohexadecanoyl-CoA + NADH + H(+)</text>
        <dbReference type="Rhea" id="RHEA:31159"/>
        <dbReference type="ChEBI" id="CHEBI:15378"/>
        <dbReference type="ChEBI" id="CHEBI:57349"/>
        <dbReference type="ChEBI" id="CHEBI:57540"/>
        <dbReference type="ChEBI" id="CHEBI:57945"/>
        <dbReference type="ChEBI" id="CHEBI:62613"/>
    </reaction>
</comment>
<comment type="biophysicochemical properties">
    <kinetics>
        <KM evidence="3">34.5 uM for acetoacetyl-CoA at pH 5.0</KM>
        <KM evidence="3">45 uM for acetoacetyl-CoA at pH 6.0</KM>
        <KM evidence="3">18.7 uM for acetoacetyl-CoA at pH 7.0</KM>
        <KM evidence="3">13.8 uM for acetoacetyl-CoA at pH 8.0</KM>
        <KM evidence="7">11.9 uM for acetoacetyl-CoA</KM>
        <KM evidence="7">24.2 uM for NADH</KM>
        <Vmax evidence="3">281.0 umol/min/mg enzyme with acetoacetyl-CoA as substrate at PH 5.0</Vmax>
        <Vmax evidence="3">448.0 umol/min/mg enzyme with acetoacetyl-CoA as substrate at PH 6.0</Vmax>
        <Vmax evidence="3">459.0 umol/min/mg enzyme with acetoacetyl-CoA as substrate at PH 6.0</Vmax>
        <Vmax evidence="3">205.0 umol/min/mg enzyme with acetoacetyl-CoA as substrate at PH 8.0</Vmax>
    </kinetics>
    <phDependence>
        <text evidence="3">Optimum at neutral pH.</text>
    </phDependence>
</comment>
<comment type="pathway">
    <text evidence="5 7">Lipid metabolism; fatty acid beta-oxidation.</text>
</comment>
<comment type="subunit">
    <text evidence="2 3 4 7">Homodimer (PubMed:10231530, PubMed:10840044, PubMed:16725361). Interacts with GLUD1; this interaction inhibits the activation of glutamate dehydrogenase 1 (GLUD1) (By similarity).</text>
</comment>
<comment type="subcellular location">
    <subcellularLocation>
        <location evidence="18">Mitochondrion matrix</location>
    </subcellularLocation>
</comment>
<comment type="alternative products">
    <event type="alternative splicing"/>
    <isoform>
        <id>Q16836-1</id>
        <name>1</name>
        <sequence type="displayed"/>
    </isoform>
    <isoform>
        <id>Q16836-2</id>
        <name>2</name>
        <sequence type="described" ref="VSP_016551 VSP_016552"/>
    </isoform>
    <isoform>
        <id>Q16836-3</id>
        <name>3</name>
        <sequence type="described" ref="VSP_016552"/>
    </isoform>
</comment>
<comment type="tissue specificity">
    <text evidence="9">Expressed in liver, kidney, pancreas, heart and skeletal muscle.</text>
</comment>
<comment type="PTM">
    <text evidence="2">Succinylation at Lys-81, adjacent to a coenzyme A binding site. Desuccinylated by SIRT5.</text>
</comment>
<comment type="disease" evidence="10">
    <disease id="DI-00002">
        <name>3-alpha-hydroxyacyl-CoA dehydrogenase deficiency</name>
        <acronym>HADH deficiency</acronym>
        <description>An autosomal recessive, metabolic disorder with various clinical presentations including hypoglycemia, hepatoencephalopathy, myopathy or cardiomyopathy, and in some cases sudden death.</description>
        <dbReference type="MIM" id="231530"/>
    </disease>
    <text>The disease is caused by variants affecting the gene represented in this entry.</text>
</comment>
<comment type="disease" evidence="5">
    <disease id="DI-01582">
        <name>Hyperinsulinemic hypoglycemia, familial, 4</name>
        <acronym>HHF4</acronym>
        <description>A form of hyperinsulinemic hypoglycemia, a clinically and genetically heterogeneous disorder characterized by inappropriate insulin secretion from the pancreatic beta-cells in the presence of low blood glucose levels. HHF4 clinical features include hypoglycemic coma, mental retardation due to repeated episodes of hypoglycemia, and seizures. HHF4 inheritance is autosomal recessive.</description>
        <dbReference type="MIM" id="609975"/>
    </disease>
    <text>The disease is caused by variants affecting the gene represented in this entry.</text>
</comment>
<comment type="similarity">
    <text evidence="17">Belongs to the 3-hydroxyacyl-CoA dehydrogenase family.</text>
</comment>
<keyword id="KW-0002">3D-structure</keyword>
<keyword id="KW-0007">Acetylation</keyword>
<keyword id="KW-0025">Alternative splicing</keyword>
<keyword id="KW-0221">Differentiation</keyword>
<keyword id="KW-0225">Disease variant</keyword>
<keyword id="KW-0276">Fatty acid metabolism</keyword>
<keyword id="KW-0379">Hydroxylation</keyword>
<keyword id="KW-0443">Lipid metabolism</keyword>
<keyword id="KW-0496">Mitochondrion</keyword>
<keyword id="KW-0520">NAD</keyword>
<keyword id="KW-0560">Oxidoreductase</keyword>
<keyword id="KW-1267">Proteomics identification</keyword>
<keyword id="KW-1185">Reference proteome</keyword>
<keyword id="KW-0744">Spermatogenesis</keyword>
<keyword id="KW-0808">Transferase</keyword>
<keyword id="KW-0809">Transit peptide</keyword>
<protein>
    <recommendedName>
        <fullName>Hydroxyacyl-coenzyme A dehydrogenase, mitochondrial</fullName>
        <shortName>HCDH</shortName>
        <ecNumber evidence="3 5 7">1.1.1.35</ecNumber>
    </recommendedName>
    <alternativeName>
        <fullName>Medium and short-chain L-3-hydroxyacyl-coenzyme A dehydrogenase</fullName>
    </alternativeName>
    <alternativeName>
        <fullName evidence="15">Short-chain 3-hydroxyacyl-CoA dehydrogenase</fullName>
    </alternativeName>
</protein>
<gene>
    <name type="primary">HADH</name>
    <name evidence="13" type="synonym">HAD</name>
    <name evidence="14" type="synonym">HAD1</name>
    <name type="synonym">HADHSC</name>
    <name evidence="15" type="synonym">SCHAD</name>
</gene>
<evidence type="ECO:0000250" key="1">
    <source>
        <dbReference type="UniProtKB" id="P00348"/>
    </source>
</evidence>
<evidence type="ECO:0000250" key="2">
    <source>
        <dbReference type="UniProtKB" id="Q61425"/>
    </source>
</evidence>
<evidence type="ECO:0000269" key="3">
    <source>
    </source>
</evidence>
<evidence type="ECO:0000269" key="4">
    <source>
    </source>
</evidence>
<evidence type="ECO:0000269" key="5">
    <source>
    </source>
</evidence>
<evidence type="ECO:0000269" key="6">
    <source>
    </source>
</evidence>
<evidence type="ECO:0000269" key="7">
    <source>
    </source>
</evidence>
<evidence type="ECO:0000269" key="8">
    <source>
    </source>
</evidence>
<evidence type="ECO:0000269" key="9">
    <source>
    </source>
</evidence>
<evidence type="ECO:0000269" key="10">
    <source ref="14"/>
</evidence>
<evidence type="ECO:0000269" key="11">
    <source ref="2"/>
</evidence>
<evidence type="ECO:0000269" key="12">
    <source ref="3"/>
</evidence>
<evidence type="ECO:0000303" key="13">
    <source>
    </source>
</evidence>
<evidence type="ECO:0000303" key="14">
    <source>
    </source>
</evidence>
<evidence type="ECO:0000303" key="15">
    <source>
    </source>
</evidence>
<evidence type="ECO:0000303" key="16">
    <source ref="2"/>
</evidence>
<evidence type="ECO:0000305" key="17"/>
<evidence type="ECO:0000305" key="18">
    <source>
    </source>
</evidence>
<evidence type="ECO:0007744" key="19">
    <source>
    </source>
</evidence>
<evidence type="ECO:0007829" key="20">
    <source>
        <dbReference type="PDB" id="1F0Y"/>
    </source>
</evidence>
<evidence type="ECO:0007829" key="21">
    <source>
        <dbReference type="PDB" id="3HAD"/>
    </source>
</evidence>
<evidence type="ECO:0007829" key="22">
    <source>
        <dbReference type="PDB" id="3RQS"/>
    </source>
</evidence>
<accession>Q16836</accession>
<accession>J3KQ17</accession>
<accession>O00324</accession>
<accession>O00397</accession>
<accession>O00753</accession>
<accession>Q4W5B4</accession>
<feature type="transit peptide" description="Mitochondrion" evidence="18">
    <location>
        <begin position="1"/>
        <end position="12"/>
    </location>
</feature>
<feature type="chain" id="PRO_0000007406" description="Hydroxyacyl-coenzyme A dehydrogenase, mitochondrial">
    <location>
        <begin position="13"/>
        <end position="314"/>
    </location>
</feature>
<feature type="binding site" evidence="3 4">
    <location>
        <begin position="34"/>
        <end position="39"/>
    </location>
    <ligand>
        <name>NAD(+)</name>
        <dbReference type="ChEBI" id="CHEBI:57540"/>
    </ligand>
</feature>
<feature type="binding site" evidence="3 4">
    <location>
        <position position="57"/>
    </location>
    <ligand>
        <name>NAD(+)</name>
        <dbReference type="ChEBI" id="CHEBI:57540"/>
    </ligand>
</feature>
<feature type="binding site" evidence="4">
    <location>
        <position position="73"/>
    </location>
    <ligand>
        <name>CoA</name>
        <dbReference type="ChEBI" id="CHEBI:57287"/>
    </ligand>
</feature>
<feature type="binding site" evidence="4">
    <location>
        <position position="80"/>
    </location>
    <ligand>
        <name>CoA</name>
        <dbReference type="ChEBI" id="CHEBI:57287"/>
    </ligand>
</feature>
<feature type="binding site" evidence="3 4">
    <location>
        <position position="122"/>
    </location>
    <ligand>
        <name>NAD(+)</name>
        <dbReference type="ChEBI" id="CHEBI:57540"/>
    </ligand>
</feature>
<feature type="binding site" evidence="3 4">
    <location>
        <position position="127"/>
    </location>
    <ligand>
        <name>NAD(+)</name>
        <dbReference type="ChEBI" id="CHEBI:57540"/>
    </ligand>
</feature>
<feature type="binding site" evidence="4">
    <location>
        <position position="149"/>
    </location>
    <ligand>
        <name>CoA</name>
        <dbReference type="ChEBI" id="CHEBI:57287"/>
    </ligand>
</feature>
<feature type="binding site" evidence="3 4">
    <location>
        <position position="149"/>
    </location>
    <ligand>
        <name>NAD(+)</name>
        <dbReference type="ChEBI" id="CHEBI:57540"/>
    </ligand>
</feature>
<feature type="binding site" evidence="3 4">
    <location>
        <position position="173"/>
    </location>
    <ligand>
        <name>NAD(+)</name>
        <dbReference type="ChEBI" id="CHEBI:57540"/>
    </ligand>
</feature>
<feature type="binding site" evidence="3 4">
    <location>
        <position position="305"/>
    </location>
    <ligand>
        <name>NAD(+)</name>
        <dbReference type="ChEBI" id="CHEBI:57540"/>
    </ligand>
</feature>
<feature type="site" description="Important for catalytic activity" evidence="17">
    <location>
        <position position="170"/>
    </location>
</feature>
<feature type="modified residue" description="N6-succinyllysine" evidence="2">
    <location>
        <position position="80"/>
    </location>
</feature>
<feature type="modified residue" description="N6-acetyllysine; alternate" evidence="2">
    <location>
        <position position="81"/>
    </location>
</feature>
<feature type="modified residue" description="N6-succinyllysine; alternate" evidence="2">
    <location>
        <position position="81"/>
    </location>
</feature>
<feature type="modified residue" description="N6-acetyllysine; alternate" evidence="2">
    <location>
        <position position="87"/>
    </location>
</feature>
<feature type="modified residue" description="N6-succinyllysine; alternate" evidence="2">
    <location>
        <position position="87"/>
    </location>
</feature>
<feature type="modified residue" description="N6-acetyllysine" evidence="2">
    <location>
        <position position="125"/>
    </location>
</feature>
<feature type="modified residue" description="N6-(2-hydroxyisobutyryl)lysine" evidence="8">
    <location>
        <position position="127"/>
    </location>
</feature>
<feature type="modified residue" description="N6-acetyllysine; alternate" evidence="2">
    <location>
        <position position="136"/>
    </location>
</feature>
<feature type="modified residue" description="N6-succinyllysine; alternate" evidence="2">
    <location>
        <position position="136"/>
    </location>
</feature>
<feature type="modified residue" description="N6-acetyllysine" evidence="2">
    <location>
        <position position="179"/>
    </location>
</feature>
<feature type="modified residue" description="N6-acetyllysine; alternate" evidence="19">
    <location>
        <position position="185"/>
    </location>
</feature>
<feature type="modified residue" description="N6-succinyllysine; alternate" evidence="2">
    <location>
        <position position="185"/>
    </location>
</feature>
<feature type="modified residue" description="N6-acetyllysine; alternate" evidence="2">
    <location>
        <position position="192"/>
    </location>
</feature>
<feature type="modified residue" description="N6-succinyllysine; alternate" evidence="2">
    <location>
        <position position="192"/>
    </location>
</feature>
<feature type="modified residue" description="N6-acetyllysine; alternate" evidence="19">
    <location>
        <position position="202"/>
    </location>
</feature>
<feature type="modified residue" description="N6-succinyllysine; alternate" evidence="2">
    <location>
        <position position="202"/>
    </location>
</feature>
<feature type="modified residue" description="N6-succinyllysine" evidence="2">
    <location>
        <position position="206"/>
    </location>
</feature>
<feature type="modified residue" description="N6-acetyllysine; alternate" evidence="2">
    <location>
        <position position="212"/>
    </location>
</feature>
<feature type="modified residue" description="N6-succinyllysine; alternate" evidence="2">
    <location>
        <position position="212"/>
    </location>
</feature>
<feature type="modified residue" description="N6-acetyllysine; alternate" evidence="19">
    <location>
        <position position="241"/>
    </location>
</feature>
<feature type="modified residue" description="N6-succinyllysine; alternate" evidence="2">
    <location>
        <position position="241"/>
    </location>
</feature>
<feature type="modified residue" description="N6-acetyllysine; alternate" evidence="19">
    <location>
        <position position="312"/>
    </location>
</feature>
<feature type="modified residue" description="N6-succinyllysine; alternate" evidence="2">
    <location>
        <position position="312"/>
    </location>
</feature>
<feature type="splice variant" id="VSP_016551" description="In isoform 2." evidence="16">
    <original>M</original>
    <variation>MGRAGLEAPPPPCGVTGTPGARGLQGRVGPRPQSLAFRGCLPRASSLPGSPRCRRRCHTM</variation>
    <location>
        <position position="1"/>
    </location>
</feature>
<feature type="splice variant" id="VSP_016552" description="In isoform 2 and isoform 3." evidence="16">
    <original>R</original>
    <variation>RDFQTCGDSNSGLGFSLK</variation>
    <location>
        <position position="236"/>
    </location>
</feature>
<feature type="sequence variant" id="VAR_024079" description="In HADH deficiency; dbSNP:rs137853101." evidence="10">
    <original>A</original>
    <variation>T</variation>
    <location>
        <position position="40"/>
    </location>
</feature>
<feature type="sequence variant" id="VAR_024080" description="In HADH deficiency; dbSNP:rs137853102." evidence="10">
    <original>D</original>
    <variation>E</variation>
    <location>
        <position position="57"/>
    </location>
</feature>
<feature type="sequence variant" id="VAR_083648" description="Found in a patient with Reye-like syndrome; does not affect 3-hydroxyacyl-CoA dehydrogenase activity; increases KM value for NADH; does not affect dimerization." evidence="7">
    <original>D</original>
    <variation>G</variation>
    <location>
        <position position="57"/>
    </location>
</feature>
<feature type="sequence variant" id="VAR_026764" description="In dbSNP:rs4956145." evidence="6 9 11 12">
    <original>L</original>
    <variation>P</variation>
    <location>
        <position position="86"/>
    </location>
</feature>
<feature type="sequence variant" id="VAR_055701" description="In dbSNP:rs1051519." evidence="9">
    <original>Q</original>
    <variation>H</variation>
    <location>
        <position position="152"/>
    </location>
</feature>
<feature type="sequence variant" id="VAR_083649" description="Found in a patient with Reye-like syndrome; loss of 3-hydroxyacyl-CoA dehydrogenase activity. Does not affect dimerization; dbSNP:rs146036912." evidence="7">
    <original>Y</original>
    <variation>H</variation>
    <location>
        <position position="226"/>
    </location>
</feature>
<feature type="sequence variant" id="VAR_024081" description="In HHF4; loss of 3-hydroxyacyl-CoA dehydrogenase activity; dbSNP:rs137853103." evidence="5">
    <original>P</original>
    <variation>L</variation>
    <location>
        <position position="258"/>
    </location>
</feature>
<feature type="helix" evidence="22">
    <location>
        <begin position="1"/>
        <end position="11"/>
    </location>
</feature>
<feature type="helix" evidence="22">
    <location>
        <begin position="14"/>
        <end position="22"/>
    </location>
</feature>
<feature type="strand" evidence="20">
    <location>
        <begin position="29"/>
        <end position="33"/>
    </location>
</feature>
<feature type="helix" evidence="20">
    <location>
        <begin position="37"/>
        <end position="48"/>
    </location>
</feature>
<feature type="strand" evidence="20">
    <location>
        <begin position="52"/>
        <end position="56"/>
    </location>
</feature>
<feature type="helix" evidence="20">
    <location>
        <begin position="60"/>
        <end position="79"/>
    </location>
</feature>
<feature type="strand" evidence="20">
    <location>
        <begin position="82"/>
        <end position="84"/>
    </location>
</feature>
<feature type="helix" evidence="20">
    <location>
        <begin position="86"/>
        <end position="98"/>
    </location>
</feature>
<feature type="strand" evidence="20">
    <location>
        <begin position="100"/>
        <end position="104"/>
    </location>
</feature>
<feature type="helix" evidence="20">
    <location>
        <begin position="106"/>
        <end position="109"/>
    </location>
</feature>
<feature type="helix" evidence="21">
    <location>
        <begin position="110"/>
        <end position="112"/>
    </location>
</feature>
<feature type="strand" evidence="20">
    <location>
        <begin position="114"/>
        <end position="118"/>
    </location>
</feature>
<feature type="helix" evidence="20">
    <location>
        <begin position="124"/>
        <end position="134"/>
    </location>
</feature>
<feature type="turn" evidence="20">
    <location>
        <begin position="135"/>
        <end position="137"/>
    </location>
</feature>
<feature type="strand" evidence="20">
    <location>
        <begin position="143"/>
        <end position="146"/>
    </location>
</feature>
<feature type="strand" evidence="20">
    <location>
        <begin position="149"/>
        <end position="151"/>
    </location>
</feature>
<feature type="helix" evidence="20">
    <location>
        <begin position="153"/>
        <end position="157"/>
    </location>
</feature>
<feature type="helix" evidence="20">
    <location>
        <begin position="163"/>
        <end position="165"/>
    </location>
</feature>
<feature type="strand" evidence="20">
    <location>
        <begin position="166"/>
        <end position="171"/>
    </location>
</feature>
<feature type="turn" evidence="20">
    <location>
        <begin position="175"/>
        <end position="177"/>
    </location>
</feature>
<feature type="strand" evidence="20">
    <location>
        <begin position="180"/>
        <end position="184"/>
    </location>
</feature>
<feature type="helix" evidence="20">
    <location>
        <begin position="191"/>
        <end position="203"/>
    </location>
</feature>
<feature type="strand" evidence="20">
    <location>
        <begin position="207"/>
        <end position="211"/>
    </location>
</feature>
<feature type="turn" evidence="20">
    <location>
        <begin position="215"/>
        <end position="218"/>
    </location>
</feature>
<feature type="helix" evidence="20">
    <location>
        <begin position="219"/>
        <end position="235"/>
    </location>
</feature>
<feature type="helix" evidence="20">
    <location>
        <begin position="241"/>
        <end position="252"/>
    </location>
</feature>
<feature type="helix" evidence="20">
    <location>
        <begin position="258"/>
        <end position="265"/>
    </location>
</feature>
<feature type="helix" evidence="20">
    <location>
        <begin position="267"/>
        <end position="279"/>
    </location>
</feature>
<feature type="turn" evidence="20">
    <location>
        <begin position="280"/>
        <end position="283"/>
    </location>
</feature>
<feature type="helix" evidence="20">
    <location>
        <begin position="285"/>
        <end position="287"/>
    </location>
</feature>
<feature type="helix" evidence="20">
    <location>
        <begin position="291"/>
        <end position="298"/>
    </location>
</feature>
<feature type="turn" evidence="20">
    <location>
        <begin position="304"/>
        <end position="307"/>
    </location>
</feature>
<feature type="strand" evidence="20">
    <location>
        <begin position="308"/>
        <end position="312"/>
    </location>
</feature>
<feature type="sequence conflict" description="In Ref. 2; AAB58153." evidence="17" ref="2">
    <original>L</original>
    <variation>P</variation>
    <location sequence="Q16836-2">
        <position position="41"/>
    </location>
</feature>
<feature type="sequence conflict" description="In Ref. 2; AAB58153." evidence="17" ref="2">
    <original>R</original>
    <variation>H</variation>
    <location sequence="Q16836-2">
        <position position="56"/>
    </location>
</feature>
<dbReference type="EC" id="1.1.1.35" evidence="3 5 7"/>
<dbReference type="EMBL" id="X96752">
    <property type="protein sequence ID" value="CAA65528.1"/>
    <property type="molecule type" value="mRNA"/>
</dbReference>
<dbReference type="EMBL" id="AF001902">
    <property type="protein sequence ID" value="AAB54008.1"/>
    <property type="molecule type" value="mRNA"/>
</dbReference>
<dbReference type="EMBL" id="AF001903">
    <property type="protein sequence ID" value="AAB54009.1"/>
    <property type="molecule type" value="mRNA"/>
</dbReference>
<dbReference type="EMBL" id="AF001904">
    <property type="protein sequence ID" value="AAB58153.1"/>
    <property type="molecule type" value="Genomic_DNA"/>
</dbReference>
<dbReference type="EMBL" id="AF095703">
    <property type="protein sequence ID" value="AAD13581.1"/>
    <property type="molecule type" value="Genomic_DNA"/>
</dbReference>
<dbReference type="EMBL" id="AC114733">
    <property type="protein sequence ID" value="AAY41050.1"/>
    <property type="molecule type" value="Genomic_DNA"/>
</dbReference>
<dbReference type="EMBL" id="AC118062">
    <property type="status" value="NOT_ANNOTATED_CDS"/>
    <property type="molecule type" value="Genomic_DNA"/>
</dbReference>
<dbReference type="EMBL" id="BC000306">
    <property type="protein sequence ID" value="AAH00306.1"/>
    <property type="molecule type" value="mRNA"/>
</dbReference>
<dbReference type="CCDS" id="CCDS3678.1">
    <molecule id="Q16836-1"/>
</dbReference>
<dbReference type="CCDS" id="CCDS54790.1">
    <molecule id="Q16836-3"/>
</dbReference>
<dbReference type="PIR" id="JC4879">
    <property type="entry name" value="JC4879"/>
</dbReference>
<dbReference type="RefSeq" id="NP_001171634.2">
    <molecule id="Q16836-3"/>
    <property type="nucleotide sequence ID" value="NM_001184705.2"/>
</dbReference>
<dbReference type="RefSeq" id="NP_005318.6">
    <molecule id="Q16836-1"/>
    <property type="nucleotide sequence ID" value="NM_005327.7"/>
</dbReference>
<dbReference type="PDB" id="1F0Y">
    <property type="method" value="X-ray"/>
    <property type="resolution" value="1.80 A"/>
    <property type="chains" value="A/B=13-314"/>
</dbReference>
<dbReference type="PDB" id="1F12">
    <property type="method" value="X-ray"/>
    <property type="resolution" value="2.40 A"/>
    <property type="chains" value="A/B=13-314"/>
</dbReference>
<dbReference type="PDB" id="1F14">
    <property type="method" value="X-ray"/>
    <property type="resolution" value="2.30 A"/>
    <property type="chains" value="A/B=13-314"/>
</dbReference>
<dbReference type="PDB" id="1F17">
    <property type="method" value="X-ray"/>
    <property type="resolution" value="2.30 A"/>
    <property type="chains" value="A/B=13-314"/>
</dbReference>
<dbReference type="PDB" id="1IL0">
    <property type="method" value="X-ray"/>
    <property type="resolution" value="2.20 A"/>
    <property type="chains" value="A/B=13-314"/>
</dbReference>
<dbReference type="PDB" id="1LSJ">
    <property type="method" value="X-ray"/>
    <property type="resolution" value="2.50 A"/>
    <property type="chains" value="A/B=13-314"/>
</dbReference>
<dbReference type="PDB" id="1LSO">
    <property type="method" value="X-ray"/>
    <property type="resolution" value="2.60 A"/>
    <property type="chains" value="A/B=13-314"/>
</dbReference>
<dbReference type="PDB" id="1M75">
    <property type="method" value="X-ray"/>
    <property type="resolution" value="2.30 A"/>
    <property type="chains" value="A/B=13-314"/>
</dbReference>
<dbReference type="PDB" id="1M76">
    <property type="method" value="X-ray"/>
    <property type="resolution" value="2.15 A"/>
    <property type="chains" value="A/B=13-314"/>
</dbReference>
<dbReference type="PDB" id="2HDH">
    <property type="method" value="X-ray"/>
    <property type="resolution" value="2.20 A"/>
    <property type="chains" value="A/B=24-314"/>
</dbReference>
<dbReference type="PDB" id="3HAD">
    <property type="method" value="X-ray"/>
    <property type="resolution" value="2.00 A"/>
    <property type="chains" value="A/B=13-314"/>
</dbReference>
<dbReference type="PDB" id="3RQS">
    <property type="method" value="X-ray"/>
    <property type="resolution" value="2.00 A"/>
    <property type="chains" value="A/B=1-314"/>
</dbReference>
<dbReference type="PDBsum" id="1F0Y"/>
<dbReference type="PDBsum" id="1F12"/>
<dbReference type="PDBsum" id="1F14"/>
<dbReference type="PDBsum" id="1F17"/>
<dbReference type="PDBsum" id="1IL0"/>
<dbReference type="PDBsum" id="1LSJ"/>
<dbReference type="PDBsum" id="1LSO"/>
<dbReference type="PDBsum" id="1M75"/>
<dbReference type="PDBsum" id="1M76"/>
<dbReference type="PDBsum" id="2HDH"/>
<dbReference type="PDBsum" id="3HAD"/>
<dbReference type="PDBsum" id="3RQS"/>
<dbReference type="SMR" id="Q16836"/>
<dbReference type="BioGRID" id="109283">
    <property type="interactions" value="120"/>
</dbReference>
<dbReference type="FunCoup" id="Q16836">
    <property type="interactions" value="1881"/>
</dbReference>
<dbReference type="IntAct" id="Q16836">
    <property type="interactions" value="15"/>
</dbReference>
<dbReference type="MINT" id="Q16836"/>
<dbReference type="STRING" id="9606.ENSP00000474560"/>
<dbReference type="DrugBank" id="DB03612">
    <property type="generic name" value="3-Hydroxybutyryl-Coenzyme A"/>
</dbReference>
<dbReference type="DrugBank" id="DB03059">
    <property type="generic name" value="Acetoacetyl-CoA"/>
</dbReference>
<dbReference type="DrugBank" id="DB00157">
    <property type="generic name" value="NADH"/>
</dbReference>
<dbReference type="DrugBank" id="DB09568">
    <property type="generic name" value="Omega-3-carboxylic acids"/>
</dbReference>
<dbReference type="SwissLipids" id="SLP:000001250"/>
<dbReference type="GlyGen" id="Q16836">
    <property type="glycosylation" value="1 site, 1 O-linked glycan (1 site)"/>
</dbReference>
<dbReference type="iPTMnet" id="Q16836"/>
<dbReference type="PhosphoSitePlus" id="Q16836"/>
<dbReference type="SwissPalm" id="Q16836"/>
<dbReference type="BioMuta" id="HADH"/>
<dbReference type="DMDM" id="311033442"/>
<dbReference type="REPRODUCTION-2DPAGE" id="IPI00298406"/>
<dbReference type="jPOST" id="Q16836"/>
<dbReference type="MassIVE" id="Q16836"/>
<dbReference type="PaxDb" id="9606-ENSP00000474560"/>
<dbReference type="PeptideAtlas" id="Q16836"/>
<dbReference type="ProteomicsDB" id="61096">
    <molecule id="Q16836-1"/>
</dbReference>
<dbReference type="ProteomicsDB" id="61097">
    <molecule id="Q16836-2"/>
</dbReference>
<dbReference type="Pumba" id="Q16836"/>
<dbReference type="TopDownProteomics" id="Q16836-1">
    <molecule id="Q16836-1"/>
</dbReference>
<dbReference type="Antibodypedia" id="26260">
    <property type="antibodies" value="573 antibodies from 33 providers"/>
</dbReference>
<dbReference type="DNASU" id="3033"/>
<dbReference type="Ensembl" id="ENST00000309522.8">
    <molecule id="Q16836-1"/>
    <property type="protein sequence ID" value="ENSP00000312288.4"/>
    <property type="gene ID" value="ENSG00000138796.18"/>
</dbReference>
<dbReference type="Ensembl" id="ENST00000603302.5">
    <molecule id="Q16836-3"/>
    <property type="protein sequence ID" value="ENSP00000474560.1"/>
    <property type="gene ID" value="ENSG00000138796.18"/>
</dbReference>
<dbReference type="GeneID" id="3033"/>
<dbReference type="KEGG" id="hsa:3033"/>
<dbReference type="MANE-Select" id="ENST00000309522.8">
    <property type="protein sequence ID" value="ENSP00000312288.4"/>
    <property type="RefSeq nucleotide sequence ID" value="NM_005327.7"/>
    <property type="RefSeq protein sequence ID" value="NP_005318.6"/>
</dbReference>
<dbReference type="UCSC" id="uc003hyq.4">
    <molecule id="Q16836-1"/>
    <property type="organism name" value="human"/>
</dbReference>
<dbReference type="AGR" id="HGNC:4799"/>
<dbReference type="CTD" id="3033"/>
<dbReference type="DisGeNET" id="3033"/>
<dbReference type="GeneCards" id="HADH"/>
<dbReference type="GeneReviews" id="HADH"/>
<dbReference type="HGNC" id="HGNC:4799">
    <property type="gene designation" value="HADH"/>
</dbReference>
<dbReference type="HPA" id="ENSG00000138796">
    <property type="expression patterns" value="Low tissue specificity"/>
</dbReference>
<dbReference type="MalaCards" id="HADH"/>
<dbReference type="MIM" id="231530">
    <property type="type" value="phenotype"/>
</dbReference>
<dbReference type="MIM" id="601609">
    <property type="type" value="gene"/>
</dbReference>
<dbReference type="MIM" id="609975">
    <property type="type" value="phenotype"/>
</dbReference>
<dbReference type="neXtProt" id="NX_Q16836"/>
<dbReference type="OpenTargets" id="ENSG00000138796"/>
<dbReference type="Orphanet" id="71212">
    <property type="disease" value="Hyperinsulinism due to short chain 3-hydroxylacyl-CoA dehydrogenase deficiency"/>
</dbReference>
<dbReference type="PharmGKB" id="PA29173"/>
<dbReference type="VEuPathDB" id="HostDB:ENSG00000138796"/>
<dbReference type="eggNOG" id="KOG2304">
    <property type="taxonomic scope" value="Eukaryota"/>
</dbReference>
<dbReference type="GeneTree" id="ENSGT00940000159984"/>
<dbReference type="HOGENOM" id="CLU_009834_2_0_1"/>
<dbReference type="InParanoid" id="Q16836"/>
<dbReference type="OMA" id="MAHPMGP"/>
<dbReference type="OrthoDB" id="5958943at2759"/>
<dbReference type="PAN-GO" id="Q16836">
    <property type="GO annotations" value="3 GO annotations based on evolutionary models"/>
</dbReference>
<dbReference type="PhylomeDB" id="Q16836"/>
<dbReference type="TreeFam" id="TF300886"/>
<dbReference type="BioCyc" id="MetaCyc:HS06563-MONOMER"/>
<dbReference type="BRENDA" id="1.1.1.35">
    <property type="organism ID" value="2681"/>
</dbReference>
<dbReference type="PathwayCommons" id="Q16836"/>
<dbReference type="Reactome" id="R-HSA-77310">
    <property type="pathway name" value="Beta oxidation of lauroyl-CoA to decanoyl-CoA-CoA"/>
</dbReference>
<dbReference type="Reactome" id="R-HSA-77346">
    <property type="pathway name" value="Beta oxidation of decanoyl-CoA to octanoyl-CoA-CoA"/>
</dbReference>
<dbReference type="Reactome" id="R-HSA-77348">
    <property type="pathway name" value="Beta oxidation of octanoyl-CoA to hexanoyl-CoA"/>
</dbReference>
<dbReference type="Reactome" id="R-HSA-77350">
    <property type="pathway name" value="Beta oxidation of hexanoyl-CoA to butanoyl-CoA"/>
</dbReference>
<dbReference type="Reactome" id="R-HSA-77352">
    <property type="pathway name" value="Beta oxidation of butanoyl-CoA to acetyl-CoA"/>
</dbReference>
<dbReference type="Reactome" id="R-HSA-9837999">
    <property type="pathway name" value="Mitochondrial protein degradation"/>
</dbReference>
<dbReference type="SABIO-RK" id="Q16836"/>
<dbReference type="SignaLink" id="Q16836"/>
<dbReference type="UniPathway" id="UPA00659"/>
<dbReference type="BioGRID-ORCS" id="3033">
    <property type="hits" value="17 hits in 1171 CRISPR screens"/>
</dbReference>
<dbReference type="CD-CODE" id="91857CE7">
    <property type="entry name" value="Nucleolus"/>
</dbReference>
<dbReference type="CD-CODE" id="FB4E32DD">
    <property type="entry name" value="Presynaptic clusters and postsynaptic densities"/>
</dbReference>
<dbReference type="ChiTaRS" id="HADH">
    <property type="organism name" value="human"/>
</dbReference>
<dbReference type="EvolutionaryTrace" id="Q16836"/>
<dbReference type="GeneWiki" id="Hydroxyacyl-Coenzyme_A_dehydrogenase"/>
<dbReference type="GenomeRNAi" id="3033"/>
<dbReference type="Pharos" id="Q16836">
    <property type="development level" value="Tbio"/>
</dbReference>
<dbReference type="PRO" id="PR:Q16836"/>
<dbReference type="Proteomes" id="UP000005640">
    <property type="component" value="Chromosome 4"/>
</dbReference>
<dbReference type="RNAct" id="Q16836">
    <property type="molecule type" value="protein"/>
</dbReference>
<dbReference type="Bgee" id="ENSG00000138796">
    <property type="expression patterns" value="Expressed in islet of Langerhans and 208 other cell types or tissues"/>
</dbReference>
<dbReference type="ExpressionAtlas" id="Q16836">
    <property type="expression patterns" value="baseline and differential"/>
</dbReference>
<dbReference type="GO" id="GO:0005737">
    <property type="term" value="C:cytoplasm"/>
    <property type="evidence" value="ECO:0000314"/>
    <property type="project" value="LIFEdb"/>
</dbReference>
<dbReference type="GO" id="GO:0005759">
    <property type="term" value="C:mitochondrial matrix"/>
    <property type="evidence" value="ECO:0000304"/>
    <property type="project" value="Reactome"/>
</dbReference>
<dbReference type="GO" id="GO:0005739">
    <property type="term" value="C:mitochondrion"/>
    <property type="evidence" value="ECO:0000314"/>
    <property type="project" value="HPA"/>
</dbReference>
<dbReference type="GO" id="GO:0005654">
    <property type="term" value="C:nucleoplasm"/>
    <property type="evidence" value="ECO:0000314"/>
    <property type="project" value="HPA"/>
</dbReference>
<dbReference type="GO" id="GO:0003857">
    <property type="term" value="F:3-hydroxyacyl-CoA dehydrogenase activity"/>
    <property type="evidence" value="ECO:0000314"/>
    <property type="project" value="UniProtKB"/>
</dbReference>
<dbReference type="GO" id="GO:0042802">
    <property type="term" value="F:identical protein binding"/>
    <property type="evidence" value="ECO:0000314"/>
    <property type="project" value="UniProtKB"/>
</dbReference>
<dbReference type="GO" id="GO:0070403">
    <property type="term" value="F:NAD+ binding"/>
    <property type="evidence" value="ECO:0000314"/>
    <property type="project" value="UniProtKB"/>
</dbReference>
<dbReference type="GO" id="GO:0016740">
    <property type="term" value="F:transferase activity"/>
    <property type="evidence" value="ECO:0007669"/>
    <property type="project" value="UniProtKB-KW"/>
</dbReference>
<dbReference type="GO" id="GO:0030154">
    <property type="term" value="P:cell differentiation"/>
    <property type="evidence" value="ECO:0007669"/>
    <property type="project" value="UniProtKB-KW"/>
</dbReference>
<dbReference type="GO" id="GO:0006635">
    <property type="term" value="P:fatty acid beta-oxidation"/>
    <property type="evidence" value="ECO:0000314"/>
    <property type="project" value="UniProtKB"/>
</dbReference>
<dbReference type="GO" id="GO:0046676">
    <property type="term" value="P:negative regulation of insulin secretion"/>
    <property type="evidence" value="ECO:0007669"/>
    <property type="project" value="Ensembl"/>
</dbReference>
<dbReference type="GO" id="GO:0120162">
    <property type="term" value="P:positive regulation of cold-induced thermogenesis"/>
    <property type="evidence" value="ECO:0000250"/>
    <property type="project" value="YuBioLab"/>
</dbReference>
<dbReference type="GO" id="GO:0050796">
    <property type="term" value="P:regulation of insulin secretion"/>
    <property type="evidence" value="ECO:0000250"/>
    <property type="project" value="UniProtKB"/>
</dbReference>
<dbReference type="GO" id="GO:0014823">
    <property type="term" value="P:response to activity"/>
    <property type="evidence" value="ECO:0007669"/>
    <property type="project" value="Ensembl"/>
</dbReference>
<dbReference type="GO" id="GO:0032868">
    <property type="term" value="P:response to insulin"/>
    <property type="evidence" value="ECO:0007669"/>
    <property type="project" value="Ensembl"/>
</dbReference>
<dbReference type="GO" id="GO:0009410">
    <property type="term" value="P:response to xenobiotic stimulus"/>
    <property type="evidence" value="ECO:0007669"/>
    <property type="project" value="Ensembl"/>
</dbReference>
<dbReference type="GO" id="GO:0007283">
    <property type="term" value="P:spermatogenesis"/>
    <property type="evidence" value="ECO:0007669"/>
    <property type="project" value="UniProtKB-KW"/>
</dbReference>
<dbReference type="FunFam" id="1.10.1040.10:FF:000019">
    <property type="entry name" value="3-hydroxybutyryl-CoA dehydrogenase FadB2"/>
    <property type="match status" value="1"/>
</dbReference>
<dbReference type="FunFam" id="3.40.50.720:FF:000258">
    <property type="entry name" value="Hydroxyacyl-coenzyme A dehydrogenase, mitochondrial"/>
    <property type="match status" value="1"/>
</dbReference>
<dbReference type="Gene3D" id="1.10.1040.10">
    <property type="entry name" value="N-(1-d-carboxylethyl)-l-norvaline Dehydrogenase, domain 2"/>
    <property type="match status" value="1"/>
</dbReference>
<dbReference type="Gene3D" id="3.40.50.720">
    <property type="entry name" value="NAD(P)-binding Rossmann-like Domain"/>
    <property type="match status" value="1"/>
</dbReference>
<dbReference type="InterPro" id="IPR022694">
    <property type="entry name" value="3-OHacyl-CoA_DH"/>
</dbReference>
<dbReference type="InterPro" id="IPR006180">
    <property type="entry name" value="3-OHacyl-CoA_DH_CS"/>
</dbReference>
<dbReference type="InterPro" id="IPR006176">
    <property type="entry name" value="3-OHacyl-CoA_DH_NAD-bd"/>
</dbReference>
<dbReference type="InterPro" id="IPR006108">
    <property type="entry name" value="3HC_DH_C"/>
</dbReference>
<dbReference type="InterPro" id="IPR008927">
    <property type="entry name" value="6-PGluconate_DH-like_C_sf"/>
</dbReference>
<dbReference type="InterPro" id="IPR013328">
    <property type="entry name" value="6PGD_dom2"/>
</dbReference>
<dbReference type="InterPro" id="IPR052242">
    <property type="entry name" value="Mito_3-hydroxyacyl-CoA_DH"/>
</dbReference>
<dbReference type="InterPro" id="IPR036291">
    <property type="entry name" value="NAD(P)-bd_dom_sf"/>
</dbReference>
<dbReference type="PANTHER" id="PTHR43561">
    <property type="match status" value="1"/>
</dbReference>
<dbReference type="PANTHER" id="PTHR43561:SF3">
    <property type="entry name" value="HYDROXYACYL-COENZYME A DEHYDROGENASE, MITOCHONDRIAL"/>
    <property type="match status" value="1"/>
</dbReference>
<dbReference type="Pfam" id="PF00725">
    <property type="entry name" value="3HCDH"/>
    <property type="match status" value="1"/>
</dbReference>
<dbReference type="Pfam" id="PF02737">
    <property type="entry name" value="3HCDH_N"/>
    <property type="match status" value="1"/>
</dbReference>
<dbReference type="PIRSF" id="PIRSF000105">
    <property type="entry name" value="HCDH"/>
    <property type="match status" value="1"/>
</dbReference>
<dbReference type="SUPFAM" id="SSF48179">
    <property type="entry name" value="6-phosphogluconate dehydrogenase C-terminal domain-like"/>
    <property type="match status" value="1"/>
</dbReference>
<dbReference type="SUPFAM" id="SSF51735">
    <property type="entry name" value="NAD(P)-binding Rossmann-fold domains"/>
    <property type="match status" value="1"/>
</dbReference>
<dbReference type="PROSITE" id="PS00067">
    <property type="entry name" value="3HCDH"/>
    <property type="match status" value="1"/>
</dbReference>
<organism>
    <name type="scientific">Homo sapiens</name>
    <name type="common">Human</name>
    <dbReference type="NCBI Taxonomy" id="9606"/>
    <lineage>
        <taxon>Eukaryota</taxon>
        <taxon>Metazoa</taxon>
        <taxon>Chordata</taxon>
        <taxon>Craniata</taxon>
        <taxon>Vertebrata</taxon>
        <taxon>Euteleostomi</taxon>
        <taxon>Mammalia</taxon>
        <taxon>Eutheria</taxon>
        <taxon>Euarchontoglires</taxon>
        <taxon>Primates</taxon>
        <taxon>Haplorrhini</taxon>
        <taxon>Catarrhini</taxon>
        <taxon>Hominidae</taxon>
        <taxon>Homo</taxon>
    </lineage>
</organism>
<name>HCDH_HUMAN</name>
<sequence length="314" mass="34294">MAFVTRQFMRSVSSSSTASASAKKIIVKHVTVIGGGLMGAGIAQVAAATGHTVVLVDQTEDILAKSKKGIEESLRKVAKKKFAENLKAGDEFVEKTLSTIATSTDAASVVHSTDLVVEAIVENLKVKNELFKRLDKFAAEHTIFASNTSSLQITSIANATTRQDRFAGLHFFNPVPVMKLVEVIKTPMTSQKTFESLVDFSKALGKHPVSCKDTPGFIVNRLLVPYLMEAIRLYERGDASKEDIDTAMKLGAGYPMGPFELLDYVGLDTTKFIVDGWHEMDAENPLHQPSPSLNKLVAENKFGKKTGEGFYKYK</sequence>
<proteinExistence type="evidence at protein level"/>